<gene>
    <name type="primary">Msln</name>
    <name type="synonym">Mes</name>
    <name type="synonym">Mpf</name>
</gene>
<sequence>MALPTARPLLGSCGSPICSRSFLLLLLSLGWIPRLQTQTTKTSQEATLLHAVNGAADFASLPTGLFLGLTCEEVSDLSMEQAKGLAMAVRQKNITLRGHQLRCLARRLPRHLTDEELNALPLDLLLFLNPAMFPGQQACAHFFSLISKANVDVLPRRSLERQRLLMEALKCQGVYGFQVSEADVRALGGLACDLPGKFVARSSEVLLPWLAGCQGPLDQSQEKAVREVLRSGRTQYGPPSKWSVSTLDALQSLVAVLDESIVQSIPKDVKAEWLQHISRDPSRLGSKLTVIHPRFRRDAEQKACPPGKEPYKVDEDLIFYQNWELEACVDGTMLARQMDLVNEIPFTYEQLSIFKHKLDKTYPQGYPESLIQQLGHFFRYVSPEDIHQWNVTSPDTVKTLLKVSKGQKMNAQAIALVACYLRGGGQLDEDMVKALGDIPLSYLCDFSPQDLHSVPSSVMWLVGPQDLDKCSQRHLGLLYQKACSAFQNVSGLEYFEKIKTFLGGASVKDLRALSQHNVSMDIATFKRLQVDSLVGLSVAEVQKLLGPNIVDLKTEEDKSPVRDWLFRQHQKDLDRLGLGLQGGIPNGYLVLDFNVREAFSSRASLLGPGFVLIWIPALLPALRLS</sequence>
<reference key="1">
    <citation type="submission" date="1996-07" db="EMBL/GenBank/DDBJ databases">
        <title>Mouse megakaryocyte potentiating factor cDNA.</title>
        <authorList>
            <person name="Kojima T."/>
            <person name="Taniguchi Y."/>
            <person name="Hattori K."/>
            <person name="Oh-eda M."/>
        </authorList>
    </citation>
    <scope>NUCLEOTIDE SEQUENCE [MRNA]</scope>
</reference>
<reference key="2">
    <citation type="journal article" date="2005" name="Science">
        <title>The transcriptional landscape of the mammalian genome.</title>
        <authorList>
            <person name="Carninci P."/>
            <person name="Kasukawa T."/>
            <person name="Katayama S."/>
            <person name="Gough J."/>
            <person name="Frith M.C."/>
            <person name="Maeda N."/>
            <person name="Oyama R."/>
            <person name="Ravasi T."/>
            <person name="Lenhard B."/>
            <person name="Wells C."/>
            <person name="Kodzius R."/>
            <person name="Shimokawa K."/>
            <person name="Bajic V.B."/>
            <person name="Brenner S.E."/>
            <person name="Batalov S."/>
            <person name="Forrest A.R."/>
            <person name="Zavolan M."/>
            <person name="Davis M.J."/>
            <person name="Wilming L.G."/>
            <person name="Aidinis V."/>
            <person name="Allen J.E."/>
            <person name="Ambesi-Impiombato A."/>
            <person name="Apweiler R."/>
            <person name="Aturaliya R.N."/>
            <person name="Bailey T.L."/>
            <person name="Bansal M."/>
            <person name="Baxter L."/>
            <person name="Beisel K.W."/>
            <person name="Bersano T."/>
            <person name="Bono H."/>
            <person name="Chalk A.M."/>
            <person name="Chiu K.P."/>
            <person name="Choudhary V."/>
            <person name="Christoffels A."/>
            <person name="Clutterbuck D.R."/>
            <person name="Crowe M.L."/>
            <person name="Dalla E."/>
            <person name="Dalrymple B.P."/>
            <person name="de Bono B."/>
            <person name="Della Gatta G."/>
            <person name="di Bernardo D."/>
            <person name="Down T."/>
            <person name="Engstrom P."/>
            <person name="Fagiolini M."/>
            <person name="Faulkner G."/>
            <person name="Fletcher C.F."/>
            <person name="Fukushima T."/>
            <person name="Furuno M."/>
            <person name="Futaki S."/>
            <person name="Gariboldi M."/>
            <person name="Georgii-Hemming P."/>
            <person name="Gingeras T.R."/>
            <person name="Gojobori T."/>
            <person name="Green R.E."/>
            <person name="Gustincich S."/>
            <person name="Harbers M."/>
            <person name="Hayashi Y."/>
            <person name="Hensch T.K."/>
            <person name="Hirokawa N."/>
            <person name="Hill D."/>
            <person name="Huminiecki L."/>
            <person name="Iacono M."/>
            <person name="Ikeo K."/>
            <person name="Iwama A."/>
            <person name="Ishikawa T."/>
            <person name="Jakt M."/>
            <person name="Kanapin A."/>
            <person name="Katoh M."/>
            <person name="Kawasawa Y."/>
            <person name="Kelso J."/>
            <person name="Kitamura H."/>
            <person name="Kitano H."/>
            <person name="Kollias G."/>
            <person name="Krishnan S.P."/>
            <person name="Kruger A."/>
            <person name="Kummerfeld S.K."/>
            <person name="Kurochkin I.V."/>
            <person name="Lareau L.F."/>
            <person name="Lazarevic D."/>
            <person name="Lipovich L."/>
            <person name="Liu J."/>
            <person name="Liuni S."/>
            <person name="McWilliam S."/>
            <person name="Madan Babu M."/>
            <person name="Madera M."/>
            <person name="Marchionni L."/>
            <person name="Matsuda H."/>
            <person name="Matsuzawa S."/>
            <person name="Miki H."/>
            <person name="Mignone F."/>
            <person name="Miyake S."/>
            <person name="Morris K."/>
            <person name="Mottagui-Tabar S."/>
            <person name="Mulder N."/>
            <person name="Nakano N."/>
            <person name="Nakauchi H."/>
            <person name="Ng P."/>
            <person name="Nilsson R."/>
            <person name="Nishiguchi S."/>
            <person name="Nishikawa S."/>
            <person name="Nori F."/>
            <person name="Ohara O."/>
            <person name="Okazaki Y."/>
            <person name="Orlando V."/>
            <person name="Pang K.C."/>
            <person name="Pavan W.J."/>
            <person name="Pavesi G."/>
            <person name="Pesole G."/>
            <person name="Petrovsky N."/>
            <person name="Piazza S."/>
            <person name="Reed J."/>
            <person name="Reid J.F."/>
            <person name="Ring B.Z."/>
            <person name="Ringwald M."/>
            <person name="Rost B."/>
            <person name="Ruan Y."/>
            <person name="Salzberg S.L."/>
            <person name="Sandelin A."/>
            <person name="Schneider C."/>
            <person name="Schoenbach C."/>
            <person name="Sekiguchi K."/>
            <person name="Semple C.A."/>
            <person name="Seno S."/>
            <person name="Sessa L."/>
            <person name="Sheng Y."/>
            <person name="Shibata Y."/>
            <person name="Shimada H."/>
            <person name="Shimada K."/>
            <person name="Silva D."/>
            <person name="Sinclair B."/>
            <person name="Sperling S."/>
            <person name="Stupka E."/>
            <person name="Sugiura K."/>
            <person name="Sultana R."/>
            <person name="Takenaka Y."/>
            <person name="Taki K."/>
            <person name="Tammoja K."/>
            <person name="Tan S.L."/>
            <person name="Tang S."/>
            <person name="Taylor M.S."/>
            <person name="Tegner J."/>
            <person name="Teichmann S.A."/>
            <person name="Ueda H.R."/>
            <person name="van Nimwegen E."/>
            <person name="Verardo R."/>
            <person name="Wei C.L."/>
            <person name="Yagi K."/>
            <person name="Yamanishi H."/>
            <person name="Zabarovsky E."/>
            <person name="Zhu S."/>
            <person name="Zimmer A."/>
            <person name="Hide W."/>
            <person name="Bult C."/>
            <person name="Grimmond S.M."/>
            <person name="Teasdale R.D."/>
            <person name="Liu E.T."/>
            <person name="Brusic V."/>
            <person name="Quackenbush J."/>
            <person name="Wahlestedt C."/>
            <person name="Mattick J.S."/>
            <person name="Hume D.A."/>
            <person name="Kai C."/>
            <person name="Sasaki D."/>
            <person name="Tomaru Y."/>
            <person name="Fukuda S."/>
            <person name="Kanamori-Katayama M."/>
            <person name="Suzuki M."/>
            <person name="Aoki J."/>
            <person name="Arakawa T."/>
            <person name="Iida J."/>
            <person name="Imamura K."/>
            <person name="Itoh M."/>
            <person name="Kato T."/>
            <person name="Kawaji H."/>
            <person name="Kawagashira N."/>
            <person name="Kawashima T."/>
            <person name="Kojima M."/>
            <person name="Kondo S."/>
            <person name="Konno H."/>
            <person name="Nakano K."/>
            <person name="Ninomiya N."/>
            <person name="Nishio T."/>
            <person name="Okada M."/>
            <person name="Plessy C."/>
            <person name="Shibata K."/>
            <person name="Shiraki T."/>
            <person name="Suzuki S."/>
            <person name="Tagami M."/>
            <person name="Waki K."/>
            <person name="Watahiki A."/>
            <person name="Okamura-Oho Y."/>
            <person name="Suzuki H."/>
            <person name="Kawai J."/>
            <person name="Hayashizaki Y."/>
        </authorList>
    </citation>
    <scope>NUCLEOTIDE SEQUENCE [LARGE SCALE MRNA]</scope>
    <source>
        <strain>C57BL/6J</strain>
        <tissue>Seminal vesicle</tissue>
    </source>
</reference>
<reference key="3">
    <citation type="journal article" date="2004" name="Genome Res.">
        <title>The status, quality, and expansion of the NIH full-length cDNA project: the Mammalian Gene Collection (MGC).</title>
        <authorList>
            <consortium name="The MGC Project Team"/>
        </authorList>
    </citation>
    <scope>NUCLEOTIDE SEQUENCE [LARGE SCALE MRNA]</scope>
    <source>
        <strain>FVB/N</strain>
        <tissue>Mammary tumor</tissue>
    </source>
</reference>
<reference key="4">
    <citation type="journal article" date="2000" name="Mol. Cell. Biol.">
        <title>Mesothelin is not required for normal mouse development or reproduction.</title>
        <authorList>
            <person name="Bera T.K."/>
            <person name="Pastan I."/>
        </authorList>
    </citation>
    <scope>FUNCTION</scope>
    <scope>TISSUE SPECIFICITY</scope>
    <scope>DEVELOPMENTAL STAGE</scope>
    <scope>DISRUPTION PHENOTYPE</scope>
</reference>
<reference key="5">
    <citation type="journal article" date="2003" name="BMC Dev. Biol.">
        <title>Stromelysin-1 and mesothelin are differentially regulated by Wnt-5a and Wnt-1 in C57mg mouse mammary epithelial cells.</title>
        <authorList>
            <person name="Prieve M.G."/>
            <person name="Moon R.T."/>
        </authorList>
    </citation>
    <scope>INDUCTION BY WNT1</scope>
</reference>
<reference key="6">
    <citation type="journal article" date="2004" name="J. Biol. Chem.">
        <title>Binding of ovarian cancer antigen CA125/MUC16 to mesothelin mediates cell adhesion.</title>
        <authorList>
            <person name="Rump A."/>
            <person name="Morikawa Y."/>
            <person name="Tanaka M."/>
            <person name="Minami S."/>
            <person name="Umesaki N."/>
            <person name="Takeuchi M."/>
            <person name="Miyajima A."/>
        </authorList>
    </citation>
    <scope>INTERACTION WITH MUC16</scope>
    <scope>DEVELOPMENTAL STAGE</scope>
    <scope>FUNCTION</scope>
</reference>
<dbReference type="EMBL" id="D86370">
    <property type="protein sequence ID" value="BAA13077.1"/>
    <property type="molecule type" value="mRNA"/>
</dbReference>
<dbReference type="EMBL" id="AK146799">
    <property type="protein sequence ID" value="BAE27441.1"/>
    <property type="molecule type" value="mRNA"/>
</dbReference>
<dbReference type="EMBL" id="AK144391">
    <property type="protein sequence ID" value="BAE25864.1"/>
    <property type="molecule type" value="mRNA"/>
</dbReference>
<dbReference type="EMBL" id="BC023753">
    <property type="protein sequence ID" value="AAH23753.1"/>
    <property type="molecule type" value="mRNA"/>
</dbReference>
<dbReference type="CCDS" id="CCDS28526.1"/>
<dbReference type="RefSeq" id="NP_001343215.1">
    <property type="nucleotide sequence ID" value="NM_001356286.1"/>
</dbReference>
<dbReference type="RefSeq" id="NP_061345.1">
    <property type="nucleotide sequence ID" value="NM_018857.2"/>
</dbReference>
<dbReference type="RefSeq" id="XP_006524713.1">
    <property type="nucleotide sequence ID" value="XM_006524650.3"/>
</dbReference>
<dbReference type="SMR" id="Q61468"/>
<dbReference type="BioGRID" id="207793">
    <property type="interactions" value="1"/>
</dbReference>
<dbReference type="FunCoup" id="Q61468">
    <property type="interactions" value="175"/>
</dbReference>
<dbReference type="IntAct" id="Q61468">
    <property type="interactions" value="1"/>
</dbReference>
<dbReference type="STRING" id="10090.ENSMUSP00000158357"/>
<dbReference type="GlyCosmos" id="Q61468">
    <property type="glycosylation" value="4 sites, No reported glycans"/>
</dbReference>
<dbReference type="GlyGen" id="Q61468">
    <property type="glycosylation" value="4 sites"/>
</dbReference>
<dbReference type="PhosphoSitePlus" id="Q61468"/>
<dbReference type="CPTAC" id="non-CPTAC-3929"/>
<dbReference type="PaxDb" id="10090-ENSMUSP00000075279"/>
<dbReference type="PeptideAtlas" id="Q61468"/>
<dbReference type="ProteomicsDB" id="295597"/>
<dbReference type="ABCD" id="Q61468">
    <property type="antibodies" value="1 sequenced antibody"/>
</dbReference>
<dbReference type="Antibodypedia" id="2310">
    <property type="antibodies" value="1218 antibodies from 47 providers"/>
</dbReference>
<dbReference type="DNASU" id="56047"/>
<dbReference type="Ensembl" id="ENSMUST00000237359.2">
    <property type="protein sequence ID" value="ENSMUSP00000158474.2"/>
    <property type="gene ID" value="ENSMUSG00000063011.8"/>
</dbReference>
<dbReference type="Ensembl" id="ENSMUST00000238120.2">
    <property type="protein sequence ID" value="ENSMUSP00000158357.2"/>
    <property type="gene ID" value="ENSMUSG00000063011.8"/>
</dbReference>
<dbReference type="GeneID" id="56047"/>
<dbReference type="KEGG" id="mmu:56047"/>
<dbReference type="UCSC" id="uc008bbo.1">
    <property type="organism name" value="mouse"/>
</dbReference>
<dbReference type="AGR" id="MGI:1888992"/>
<dbReference type="CTD" id="10232"/>
<dbReference type="MGI" id="MGI:1888992">
    <property type="gene designation" value="Msln"/>
</dbReference>
<dbReference type="VEuPathDB" id="HostDB:ENSMUSG00000063011"/>
<dbReference type="eggNOG" id="ENOG502QRX1">
    <property type="taxonomic scope" value="Eukaryota"/>
</dbReference>
<dbReference type="GeneTree" id="ENSGT00950000182957"/>
<dbReference type="HOGENOM" id="CLU_014552_3_0_1"/>
<dbReference type="InParanoid" id="Q61468"/>
<dbReference type="OMA" id="NHLVCEM"/>
<dbReference type="PhylomeDB" id="Q61468"/>
<dbReference type="TreeFam" id="TF331713"/>
<dbReference type="Reactome" id="R-MMU-163125">
    <property type="pathway name" value="Post-translational modification: synthesis of GPI-anchored proteins"/>
</dbReference>
<dbReference type="Reactome" id="R-MMU-381426">
    <property type="pathway name" value="Regulation of Insulin-like Growth Factor (IGF) transport and uptake by Insulin-like Growth Factor Binding Proteins (IGFBPs)"/>
</dbReference>
<dbReference type="Reactome" id="R-MMU-8957275">
    <property type="pathway name" value="Post-translational protein phosphorylation"/>
</dbReference>
<dbReference type="BioGRID-ORCS" id="56047">
    <property type="hits" value="5 hits in 80 CRISPR screens"/>
</dbReference>
<dbReference type="ChiTaRS" id="Msln">
    <property type="organism name" value="mouse"/>
</dbReference>
<dbReference type="PRO" id="PR:Q61468"/>
<dbReference type="Proteomes" id="UP000000589">
    <property type="component" value="Chromosome 17"/>
</dbReference>
<dbReference type="RNAct" id="Q61468">
    <property type="molecule type" value="protein"/>
</dbReference>
<dbReference type="Bgee" id="ENSMUSG00000063011">
    <property type="expression patterns" value="Expressed in left lung lobe and 111 other cell types or tissues"/>
</dbReference>
<dbReference type="ExpressionAtlas" id="Q61468">
    <property type="expression patterns" value="baseline and differential"/>
</dbReference>
<dbReference type="GO" id="GO:0005615">
    <property type="term" value="C:extracellular space"/>
    <property type="evidence" value="ECO:0007005"/>
    <property type="project" value="BHF-UCL"/>
</dbReference>
<dbReference type="GO" id="GO:0005794">
    <property type="term" value="C:Golgi apparatus"/>
    <property type="evidence" value="ECO:0007669"/>
    <property type="project" value="UniProtKB-SubCell"/>
</dbReference>
<dbReference type="GO" id="GO:0005886">
    <property type="term" value="C:plasma membrane"/>
    <property type="evidence" value="ECO:0007669"/>
    <property type="project" value="UniProtKB-SubCell"/>
</dbReference>
<dbReference type="GO" id="GO:0098552">
    <property type="term" value="C:side of membrane"/>
    <property type="evidence" value="ECO:0007669"/>
    <property type="project" value="UniProtKB-KW"/>
</dbReference>
<dbReference type="GO" id="GO:0007155">
    <property type="term" value="P:cell adhesion"/>
    <property type="evidence" value="ECO:0007669"/>
    <property type="project" value="UniProtKB-KW"/>
</dbReference>
<dbReference type="FunFam" id="1.20.970.40:FF:000001">
    <property type="entry name" value="Mesothelin"/>
    <property type="match status" value="1"/>
</dbReference>
<dbReference type="Gene3D" id="1.20.970.40">
    <property type="match status" value="1"/>
</dbReference>
<dbReference type="InterPro" id="IPR010335">
    <property type="entry name" value="Mesothelin"/>
</dbReference>
<dbReference type="InterPro" id="IPR026664">
    <property type="entry name" value="Stereocilin-rel"/>
</dbReference>
<dbReference type="PANTHER" id="PTHR23412:SF6">
    <property type="entry name" value="MESOTHELIN"/>
    <property type="match status" value="1"/>
</dbReference>
<dbReference type="PANTHER" id="PTHR23412">
    <property type="entry name" value="STEREOCILIN RELATED"/>
    <property type="match status" value="1"/>
</dbReference>
<dbReference type="Pfam" id="PF06060">
    <property type="entry name" value="Mesothelin"/>
    <property type="match status" value="1"/>
</dbReference>
<protein>
    <recommendedName>
        <fullName>Mesothelin</fullName>
    </recommendedName>
    <alternativeName>
        <fullName>Pre-pro-megakaryocyte-potentiating factor</fullName>
    </alternativeName>
    <component>
        <recommendedName>
            <fullName>Megakaryocyte-potentiating factor</fullName>
            <shortName>MPF</shortName>
        </recommendedName>
    </component>
    <component>
        <recommendedName>
            <fullName>Mesothelin, cleaved form</fullName>
        </recommendedName>
    </component>
</protein>
<evidence type="ECO:0000250" key="1"/>
<evidence type="ECO:0000250" key="2">
    <source>
        <dbReference type="UniProtKB" id="Q13421"/>
    </source>
</evidence>
<evidence type="ECO:0000255" key="3"/>
<evidence type="ECO:0000269" key="4">
    <source>
    </source>
</evidence>
<evidence type="ECO:0000269" key="5">
    <source>
    </source>
</evidence>
<evidence type="ECO:0000269" key="6">
    <source>
    </source>
</evidence>
<evidence type="ECO:0000305" key="7"/>
<keyword id="KW-0130">Cell adhesion</keyword>
<keyword id="KW-1003">Cell membrane</keyword>
<keyword id="KW-0165">Cleavage on pair of basic residues</keyword>
<keyword id="KW-1015">Disulfide bond</keyword>
<keyword id="KW-0325">Glycoprotein</keyword>
<keyword id="KW-0333">Golgi apparatus</keyword>
<keyword id="KW-0336">GPI-anchor</keyword>
<keyword id="KW-0449">Lipoprotein</keyword>
<keyword id="KW-0472">Membrane</keyword>
<keyword id="KW-0597">Phosphoprotein</keyword>
<keyword id="KW-1185">Reference proteome</keyword>
<keyword id="KW-0964">Secreted</keyword>
<keyword id="KW-0732">Signal</keyword>
<accession>Q61468</accession>
<proteinExistence type="evidence at protein level"/>
<comment type="function">
    <text evidence="4 6">Membrane-anchored forms may play a role in cellular adhesion.</text>
</comment>
<comment type="function">
    <text evidence="1">Megakaryocyte-potentiating factor (MPF) may potentiate megakaryocyte colony formation.</text>
</comment>
<comment type="subunit">
    <text evidence="6">Interacts with MUC16.</text>
</comment>
<comment type="subcellular location">
    <subcellularLocation>
        <location evidence="1">Cell membrane</location>
        <topology evidence="1">Lipid-anchor</topology>
        <topology evidence="1">GPI-anchor</topology>
    </subcellularLocation>
    <subcellularLocation>
        <location evidence="1">Golgi apparatus</location>
    </subcellularLocation>
</comment>
<comment type="subcellular location">
    <molecule>Megakaryocyte-potentiating factor</molecule>
    <subcellularLocation>
        <location evidence="1">Secreted</location>
    </subcellularLocation>
</comment>
<comment type="tissue specificity">
    <text evidence="4">Highly expressed in lung and heart. Expressed at low levels in spleen, liver, kidney and testis. Present in lung (at protein level).</text>
</comment>
<comment type="developmental stage">
    <text evidence="4 6">Expressed at 7 dpc, down-regulated at 11 dpc, re-expressed at 15 dpc and peaks at 17 dpc. Present in embryonic diaphragm (at protein level).</text>
</comment>
<comment type="induction">
    <text evidence="5">By WNT1 but not by WNT5A in mammary epithelial cells.</text>
</comment>
<comment type="PTM">
    <text evidence="1">Proteolytically cleaved by a furin-like convertase to generate megakaryocyte-potentiating factor (MPF), and the cleaved form of mesothelin.</text>
</comment>
<comment type="disruption phenotype">
    <text evidence="4">Mice have normal growth and reproductive function, and normal platelet counts.</text>
</comment>
<comment type="similarity">
    <text evidence="7">Belongs to the mesothelin family.</text>
</comment>
<feature type="signal peptide" evidence="3">
    <location>
        <begin position="1"/>
        <end position="35"/>
    </location>
</feature>
<feature type="chain" id="PRO_0000253562" description="Mesothelin">
    <location>
        <begin position="36"/>
        <end position="600"/>
    </location>
</feature>
<feature type="chain" id="PRO_0000253563" description="Megakaryocyte-potentiating factor">
    <location>
        <begin position="36"/>
        <end position="288"/>
    </location>
</feature>
<feature type="chain" id="PRO_0000253564" description="Mesothelin, cleaved form">
    <location>
        <begin position="298"/>
        <end position="600"/>
    </location>
</feature>
<feature type="propeptide" id="PRO_0000253565" description="Removed in mature form" evidence="3">
    <location>
        <begin position="601"/>
        <end position="625"/>
    </location>
</feature>
<feature type="modified residue" description="Phosphoserine" evidence="2">
    <location>
        <position position="202"/>
    </location>
</feature>
<feature type="lipid moiety-binding region" description="GPI-anchor amidated serine" evidence="3">
    <location>
        <position position="600"/>
    </location>
</feature>
<feature type="glycosylation site" description="N-linked (GlcNAc...) asparagine" evidence="3">
    <location>
        <position position="93"/>
    </location>
</feature>
<feature type="glycosylation site" description="N-linked (GlcNAc...) asparagine" evidence="3">
    <location>
        <position position="390"/>
    </location>
</feature>
<feature type="glycosylation site" description="N-linked (GlcNAc...) asparagine" evidence="3">
    <location>
        <position position="488"/>
    </location>
</feature>
<feature type="glycosylation site" description="N-linked (GlcNAc...) asparagine" evidence="3">
    <location>
        <position position="517"/>
    </location>
</feature>
<feature type="disulfide bond" evidence="1">
    <location>
        <begin position="304"/>
        <end position="328"/>
    </location>
</feature>
<organism>
    <name type="scientific">Mus musculus</name>
    <name type="common">Mouse</name>
    <dbReference type="NCBI Taxonomy" id="10090"/>
    <lineage>
        <taxon>Eukaryota</taxon>
        <taxon>Metazoa</taxon>
        <taxon>Chordata</taxon>
        <taxon>Craniata</taxon>
        <taxon>Vertebrata</taxon>
        <taxon>Euteleostomi</taxon>
        <taxon>Mammalia</taxon>
        <taxon>Eutheria</taxon>
        <taxon>Euarchontoglires</taxon>
        <taxon>Glires</taxon>
        <taxon>Rodentia</taxon>
        <taxon>Myomorpha</taxon>
        <taxon>Muroidea</taxon>
        <taxon>Muridae</taxon>
        <taxon>Murinae</taxon>
        <taxon>Mus</taxon>
        <taxon>Mus</taxon>
    </lineage>
</organism>
<name>MSLN_MOUSE</name>